<accession>P49745</accession>
<proteinExistence type="evidence at transcript level"/>
<keyword id="KW-0202">Cytokine</keyword>
<keyword id="KW-1015">Disulfide bond</keyword>
<keyword id="KW-0325">Glycoprotein</keyword>
<keyword id="KW-0372">Hormone</keyword>
<keyword id="KW-1185">Reference proteome</keyword>
<keyword id="KW-0964">Secreted</keyword>
<keyword id="KW-0732">Signal</keyword>
<evidence type="ECO:0000250" key="1">
    <source>
        <dbReference type="UniProtKB" id="P40225"/>
    </source>
</evidence>
<evidence type="ECO:0000255" key="2"/>
<evidence type="ECO:0000256" key="3">
    <source>
        <dbReference type="SAM" id="MobiDB-lite"/>
    </source>
</evidence>
<evidence type="ECO:0000305" key="4"/>
<protein>
    <recommendedName>
        <fullName>Thrombopoietin</fullName>
    </recommendedName>
</protein>
<name>TPO_RAT</name>
<feature type="signal peptide" evidence="2">
    <location>
        <begin position="1"/>
        <end position="21"/>
    </location>
</feature>
<feature type="chain" id="PRO_0000008413" description="Thrombopoietin">
    <location>
        <begin position="22"/>
        <end position="326"/>
    </location>
</feature>
<feature type="region of interest" description="Disordered" evidence="3">
    <location>
        <begin position="307"/>
        <end position="326"/>
    </location>
</feature>
<feature type="compositionally biased region" description="Pro residues" evidence="3">
    <location>
        <begin position="308"/>
        <end position="326"/>
    </location>
</feature>
<feature type="glycosylation site" description="N-linked (GlcNAc...) asparagine" evidence="2">
    <location>
        <position position="197"/>
    </location>
</feature>
<feature type="glycosylation site" description="N-linked (GlcNAc...) asparagine" evidence="2">
    <location>
        <position position="206"/>
    </location>
</feature>
<feature type="glycosylation site" description="N-linked (GlcNAc...) asparagine" evidence="2">
    <location>
        <position position="235"/>
    </location>
</feature>
<feature type="glycosylation site" description="N-linked (GlcNAc...) asparagine" evidence="2">
    <location>
        <position position="249"/>
    </location>
</feature>
<feature type="glycosylation site" description="N-linked (GlcNAc...) asparagine" evidence="2">
    <location>
        <position position="256"/>
    </location>
</feature>
<feature type="disulfide bond" evidence="2">
    <location>
        <begin position="28"/>
        <end position="172"/>
    </location>
</feature>
<feature type="disulfide bond" evidence="2">
    <location>
        <begin position="50"/>
        <end position="106"/>
    </location>
</feature>
<gene>
    <name type="primary">Thpo</name>
</gene>
<sequence>MELTDLLLVAILLLTARLTLSSPVPPACDPRLLNKLLRDSYLLHSRLSQCPDVNPLSIPVLLPAVDFSLGEWKTQTEQSKAQDILGAVSLLLEGVMAARGQLEPSCLSSLLGQLSGQVRLLLGALQGLLGTQLPPQGRTTAHKDPSALFLSLQQLLRGKVRFLLLVEGPALCVRRTLPTTAVPSRTSQLLTLNKFPNRTSGLLETNFSVVARTAGPGLLNRLQGFRAKIIPGQLNQTSGSLDQIPGYLNGTHEPVNGTHGLFAGTSLQTLEAPDVVPGAFNKGSLPLNLQSGLPPIPSLAADGYTLFPPSPTFPTPGSPPQLPPVS</sequence>
<comment type="function">
    <text evidence="1">Lineage-specific cytokine affecting the proliferation and maturation of megakaryocytes from their committed progenitor cells. It acts at a late stage of megakaryocyte development. It may be the major physiological regulator of circulating platelets.</text>
</comment>
<comment type="subcellular location">
    <subcellularLocation>
        <location evidence="1">Secreted</location>
    </subcellularLocation>
</comment>
<comment type="domain">
    <text>Two-domain structure with an erythropoietin-like N-terminal and a Ser/Pro/Thr-rich C-terminal.</text>
</comment>
<comment type="similarity">
    <text evidence="4">Belongs to the EPO/TPO family.</text>
</comment>
<reference key="1">
    <citation type="journal article" date="1995" name="Gene">
        <title>The sequence of a rat cDNA encoding thrombopoietin.</title>
        <authorList>
            <person name="Ogami K."/>
            <person name="Shimada Y."/>
            <person name="Sohma Y."/>
            <person name="Akahori H."/>
            <person name="Kato T."/>
            <person name="Kawamura K."/>
            <person name="Miyazaki H."/>
        </authorList>
    </citation>
    <scope>NUCLEOTIDE SEQUENCE [MRNA]</scope>
    <source>
        <tissue>Liver</tissue>
    </source>
</reference>
<dbReference type="EMBL" id="D32207">
    <property type="protein sequence ID" value="BAA06906.1"/>
    <property type="molecule type" value="mRNA"/>
</dbReference>
<dbReference type="PIR" id="JC4125">
    <property type="entry name" value="JC4125"/>
</dbReference>
<dbReference type="RefSeq" id="NP_112395.1">
    <property type="nucleotide sequence ID" value="NM_031133.2"/>
</dbReference>
<dbReference type="RefSeq" id="XP_008767049.1">
    <property type="nucleotide sequence ID" value="XM_008768827.2"/>
</dbReference>
<dbReference type="RefSeq" id="XP_008767050.1">
    <property type="nucleotide sequence ID" value="XM_008768828.2"/>
</dbReference>
<dbReference type="RefSeq" id="XP_017453567.1">
    <property type="nucleotide sequence ID" value="XM_017598078.1"/>
</dbReference>
<dbReference type="RefSeq" id="XP_017453670.1">
    <property type="nucleotide sequence ID" value="XM_017598181.1"/>
</dbReference>
<dbReference type="SMR" id="P49745"/>
<dbReference type="FunCoup" id="P49745">
    <property type="interactions" value="65"/>
</dbReference>
<dbReference type="STRING" id="10116.ENSRNOP00000065517"/>
<dbReference type="GlyCosmos" id="P49745">
    <property type="glycosylation" value="5 sites, No reported glycans"/>
</dbReference>
<dbReference type="GlyGen" id="P49745">
    <property type="glycosylation" value="6 sites"/>
</dbReference>
<dbReference type="iPTMnet" id="P49745"/>
<dbReference type="PhosphoSitePlus" id="P49745"/>
<dbReference type="PaxDb" id="10116-ENSRNOP00000065517"/>
<dbReference type="GeneID" id="81811"/>
<dbReference type="KEGG" id="rno:81811"/>
<dbReference type="AGR" id="RGD:621438"/>
<dbReference type="CTD" id="81811"/>
<dbReference type="RGD" id="621438">
    <property type="gene designation" value="Thpo"/>
</dbReference>
<dbReference type="VEuPathDB" id="HostDB:ENSRNOG00000046850"/>
<dbReference type="eggNOG" id="ENOG502S9T0">
    <property type="taxonomic scope" value="Eukaryota"/>
</dbReference>
<dbReference type="HOGENOM" id="CLU_039844_0_0_1"/>
<dbReference type="InParanoid" id="P49745"/>
<dbReference type="PhylomeDB" id="P49745"/>
<dbReference type="TreeFam" id="TF338084"/>
<dbReference type="PRO" id="PR:P49745"/>
<dbReference type="Proteomes" id="UP000002494">
    <property type="component" value="Chromosome 11"/>
</dbReference>
<dbReference type="Bgee" id="ENSRNOG00000046850">
    <property type="expression patterns" value="Expressed in liver and 12 other cell types or tissues"/>
</dbReference>
<dbReference type="GO" id="GO:0005576">
    <property type="term" value="C:extracellular region"/>
    <property type="evidence" value="ECO:0000314"/>
    <property type="project" value="RGD"/>
</dbReference>
<dbReference type="GO" id="GO:0005615">
    <property type="term" value="C:extracellular space"/>
    <property type="evidence" value="ECO:0000266"/>
    <property type="project" value="RGD"/>
</dbReference>
<dbReference type="GO" id="GO:0005125">
    <property type="term" value="F:cytokine activity"/>
    <property type="evidence" value="ECO:0000266"/>
    <property type="project" value="RGD"/>
</dbReference>
<dbReference type="GO" id="GO:0005179">
    <property type="term" value="F:hormone activity"/>
    <property type="evidence" value="ECO:0007669"/>
    <property type="project" value="UniProtKB-KW"/>
</dbReference>
<dbReference type="GO" id="GO:0005102">
    <property type="term" value="F:signaling receptor binding"/>
    <property type="evidence" value="ECO:0000314"/>
    <property type="project" value="RGD"/>
</dbReference>
<dbReference type="GO" id="GO:0008283">
    <property type="term" value="P:cell population proliferation"/>
    <property type="evidence" value="ECO:0007669"/>
    <property type="project" value="InterPro"/>
</dbReference>
<dbReference type="GO" id="GO:0097696">
    <property type="term" value="P:cell surface receptor signaling pathway via STAT"/>
    <property type="evidence" value="ECO:0000266"/>
    <property type="project" value="RGD"/>
</dbReference>
<dbReference type="GO" id="GO:0071222">
    <property type="term" value="P:cellular response to lipopolysaccharide"/>
    <property type="evidence" value="ECO:0000270"/>
    <property type="project" value="RGD"/>
</dbReference>
<dbReference type="GO" id="GO:0035855">
    <property type="term" value="P:megakaryocyte development"/>
    <property type="evidence" value="ECO:0000266"/>
    <property type="project" value="RGD"/>
</dbReference>
<dbReference type="GO" id="GO:0030219">
    <property type="term" value="P:megakaryocyte differentiation"/>
    <property type="evidence" value="ECO:0000250"/>
    <property type="project" value="UniProtKB"/>
</dbReference>
<dbReference type="GO" id="GO:0030099">
    <property type="term" value="P:myeloid cell differentiation"/>
    <property type="evidence" value="ECO:0000266"/>
    <property type="project" value="RGD"/>
</dbReference>
<dbReference type="GO" id="GO:0008284">
    <property type="term" value="P:positive regulation of cell population proliferation"/>
    <property type="evidence" value="ECO:0000314"/>
    <property type="project" value="RGD"/>
</dbReference>
<dbReference type="GO" id="GO:0070374">
    <property type="term" value="P:positive regulation of ERK1 and ERK2 cascade"/>
    <property type="evidence" value="ECO:0000250"/>
    <property type="project" value="UniProtKB"/>
</dbReference>
<dbReference type="GO" id="GO:1902035">
    <property type="term" value="P:positive regulation of hematopoietic stem cell proliferation"/>
    <property type="evidence" value="ECO:0000266"/>
    <property type="project" value="RGD"/>
</dbReference>
<dbReference type="GO" id="GO:0043410">
    <property type="term" value="P:positive regulation of MAPK cascade"/>
    <property type="evidence" value="ECO:0000266"/>
    <property type="project" value="RGD"/>
</dbReference>
<dbReference type="GO" id="GO:0045654">
    <property type="term" value="P:positive regulation of megakaryocyte differentiation"/>
    <property type="evidence" value="ECO:0000250"/>
    <property type="project" value="UniProtKB"/>
</dbReference>
<dbReference type="GO" id="GO:0051897">
    <property type="term" value="P:positive regulation of phosphatidylinositol 3-kinase/protein kinase B signal transduction"/>
    <property type="evidence" value="ECO:0000250"/>
    <property type="project" value="UniProtKB"/>
</dbReference>
<dbReference type="GO" id="GO:0001934">
    <property type="term" value="P:positive regulation of protein phosphorylation"/>
    <property type="evidence" value="ECO:0000250"/>
    <property type="project" value="UniProtKB"/>
</dbReference>
<dbReference type="GO" id="GO:0032496">
    <property type="term" value="P:response to lipopolysaccharide"/>
    <property type="evidence" value="ECO:0000270"/>
    <property type="project" value="RGD"/>
</dbReference>
<dbReference type="GO" id="GO:0038163">
    <property type="term" value="P:thrombopoietin-mediated signaling pathway"/>
    <property type="evidence" value="ECO:0000250"/>
    <property type="project" value="UniProtKB"/>
</dbReference>
<dbReference type="FunFam" id="1.20.1250.10:FF:000015">
    <property type="entry name" value="thrombopoietin isoform X2"/>
    <property type="match status" value="1"/>
</dbReference>
<dbReference type="Gene3D" id="1.20.1250.10">
    <property type="match status" value="1"/>
</dbReference>
<dbReference type="InterPro" id="IPR009079">
    <property type="entry name" value="4_helix_cytokine-like_core"/>
</dbReference>
<dbReference type="InterPro" id="IPR019767">
    <property type="entry name" value="EPO/TPO_CS"/>
</dbReference>
<dbReference type="InterPro" id="IPR001323">
    <property type="entry name" value="EPO_TPO"/>
</dbReference>
<dbReference type="InterPro" id="IPR003978">
    <property type="entry name" value="Thrombopoietin"/>
</dbReference>
<dbReference type="PANTHER" id="PTHR10560">
    <property type="entry name" value="THROMBOPOIETIN"/>
    <property type="match status" value="1"/>
</dbReference>
<dbReference type="PANTHER" id="PTHR10560:SF0">
    <property type="entry name" value="THROMBOPOIETIN"/>
    <property type="match status" value="1"/>
</dbReference>
<dbReference type="Pfam" id="PF00758">
    <property type="entry name" value="EPO_TPO"/>
    <property type="match status" value="1"/>
</dbReference>
<dbReference type="PRINTS" id="PR01485">
    <property type="entry name" value="THROMBOPTN"/>
</dbReference>
<dbReference type="SUPFAM" id="SSF47266">
    <property type="entry name" value="4-helical cytokines"/>
    <property type="match status" value="1"/>
</dbReference>
<dbReference type="PROSITE" id="PS00817">
    <property type="entry name" value="EPO_TPO"/>
    <property type="match status" value="1"/>
</dbReference>
<organism>
    <name type="scientific">Rattus norvegicus</name>
    <name type="common">Rat</name>
    <dbReference type="NCBI Taxonomy" id="10116"/>
    <lineage>
        <taxon>Eukaryota</taxon>
        <taxon>Metazoa</taxon>
        <taxon>Chordata</taxon>
        <taxon>Craniata</taxon>
        <taxon>Vertebrata</taxon>
        <taxon>Euteleostomi</taxon>
        <taxon>Mammalia</taxon>
        <taxon>Eutheria</taxon>
        <taxon>Euarchontoglires</taxon>
        <taxon>Glires</taxon>
        <taxon>Rodentia</taxon>
        <taxon>Myomorpha</taxon>
        <taxon>Muroidea</taxon>
        <taxon>Muridae</taxon>
        <taxon>Murinae</taxon>
        <taxon>Rattus</taxon>
    </lineage>
</organism>